<reference key="1">
    <citation type="submission" date="2007-04" db="EMBL/GenBank/DDBJ databases">
        <title>Complete sequence of Pseudomonas mendocina ymp.</title>
        <authorList>
            <consortium name="US DOE Joint Genome Institute"/>
            <person name="Copeland A."/>
            <person name="Lucas S."/>
            <person name="Lapidus A."/>
            <person name="Barry K."/>
            <person name="Glavina del Rio T."/>
            <person name="Dalin E."/>
            <person name="Tice H."/>
            <person name="Pitluck S."/>
            <person name="Kiss H."/>
            <person name="Brettin T."/>
            <person name="Detter J.C."/>
            <person name="Bruce D."/>
            <person name="Han C."/>
            <person name="Schmutz J."/>
            <person name="Larimer F."/>
            <person name="Land M."/>
            <person name="Hauser L."/>
            <person name="Kyrpides N."/>
            <person name="Mikhailova N."/>
            <person name="Hersman L."/>
            <person name="Dubois J."/>
            <person name="Maurice P."/>
            <person name="Richardson P."/>
        </authorList>
    </citation>
    <scope>NUCLEOTIDE SEQUENCE [LARGE SCALE GENOMIC DNA]</scope>
    <source>
        <strain>ymp</strain>
    </source>
</reference>
<protein>
    <recommendedName>
        <fullName evidence="1">Phosphoenolpyruvate carboxykinase (ATP)</fullName>
        <shortName evidence="1">PCK</shortName>
        <shortName evidence="1">PEP carboxykinase</shortName>
        <shortName evidence="1">PEPCK</shortName>
        <ecNumber evidence="1">4.1.1.49</ecNumber>
    </recommendedName>
</protein>
<sequence>MTQANNAVYTDISAAQLVEEAIRRGEGELAANGALVVRTGHRTGRSPADRFIVQEPSTEAQIAWGAINRPFPADKFDALWDRVASFNNAQEHFVSHVHVGSAEAHYLPVKMTTATAWQNLFGRQLFINPSAYNPAGKAEWEILNVANFECVPERDGTNSDGCVIINFAAKKVLIAGMRYAGEMKKAMFSVQNFLLPEKDVLPMHCAANIGEEGDVTLFFGLSGTGKTTLSADESRYLIGDDEHGWGEGVVFNIEGGCYAKCIDLSEKNEPVIWKAIQFGTVLENVVLDEQRTPDYSDDSLTQNSRAAYPLEYVEKRSEKNLGGEPNAVIFLTCDLTGVLPPVSILNNEQAAYHFLSGYTALVGSTEMGSGGGIKSTFSTCFGAPFFPRPAGVYAELLIKRINAFGSKVYLVNTGWTGGGYGVGKRFNIPTTRGVIAAIQSGALIGAETEHLPIINLDVPKSVPGVETNLLNPRNTWADKNAYDEAAKGLAKLFIDNFAKFDVSEAIKNAGPQL</sequence>
<feature type="chain" id="PRO_1000026340" description="Phosphoenolpyruvate carboxykinase (ATP)">
    <location>
        <begin position="1"/>
        <end position="513"/>
    </location>
</feature>
<feature type="binding site" evidence="1">
    <location>
        <position position="45"/>
    </location>
    <ligand>
        <name>substrate</name>
    </ligand>
</feature>
<feature type="binding site" evidence="1">
    <location>
        <position position="179"/>
    </location>
    <ligand>
        <name>substrate</name>
    </ligand>
</feature>
<feature type="binding site" evidence="1">
    <location>
        <position position="185"/>
    </location>
    <ligand>
        <name>ATP</name>
        <dbReference type="ChEBI" id="CHEBI:30616"/>
    </ligand>
</feature>
<feature type="binding site" evidence="1">
    <location>
        <position position="185"/>
    </location>
    <ligand>
        <name>Mn(2+)</name>
        <dbReference type="ChEBI" id="CHEBI:29035"/>
    </ligand>
</feature>
<feature type="binding site" evidence="1">
    <location>
        <position position="185"/>
    </location>
    <ligand>
        <name>substrate</name>
    </ligand>
</feature>
<feature type="binding site" evidence="1">
    <location>
        <position position="204"/>
    </location>
    <ligand>
        <name>ATP</name>
        <dbReference type="ChEBI" id="CHEBI:30616"/>
    </ligand>
</feature>
<feature type="binding site" evidence="1">
    <location>
        <position position="204"/>
    </location>
    <ligand>
        <name>Mn(2+)</name>
        <dbReference type="ChEBI" id="CHEBI:29035"/>
    </ligand>
</feature>
<feature type="binding site" evidence="1">
    <location>
        <begin position="220"/>
        <end position="228"/>
    </location>
    <ligand>
        <name>ATP</name>
        <dbReference type="ChEBI" id="CHEBI:30616"/>
    </ligand>
</feature>
<feature type="binding site" evidence="1">
    <location>
        <position position="241"/>
    </location>
    <ligand>
        <name>Mn(2+)</name>
        <dbReference type="ChEBI" id="CHEBI:29035"/>
    </ligand>
</feature>
<feature type="binding site" evidence="1">
    <location>
        <position position="269"/>
    </location>
    <ligand>
        <name>ATP</name>
        <dbReference type="ChEBI" id="CHEBI:30616"/>
    </ligand>
</feature>
<feature type="binding site" evidence="1">
    <location>
        <position position="305"/>
    </location>
    <ligand>
        <name>ATP</name>
        <dbReference type="ChEBI" id="CHEBI:30616"/>
    </ligand>
</feature>
<feature type="binding site" evidence="1">
    <location>
        <position position="305"/>
    </location>
    <ligand>
        <name>substrate</name>
    </ligand>
</feature>
<feature type="binding site" evidence="1">
    <location>
        <position position="431"/>
    </location>
    <ligand>
        <name>ATP</name>
        <dbReference type="ChEBI" id="CHEBI:30616"/>
    </ligand>
</feature>
<organism>
    <name type="scientific">Ectopseudomonas mendocina (strain ymp)</name>
    <name type="common">Pseudomonas mendocina</name>
    <dbReference type="NCBI Taxonomy" id="399739"/>
    <lineage>
        <taxon>Bacteria</taxon>
        <taxon>Pseudomonadati</taxon>
        <taxon>Pseudomonadota</taxon>
        <taxon>Gammaproteobacteria</taxon>
        <taxon>Pseudomonadales</taxon>
        <taxon>Pseudomonadaceae</taxon>
        <taxon>Ectopseudomonas</taxon>
    </lineage>
</organism>
<gene>
    <name evidence="1" type="primary">pckA</name>
    <name type="ordered locus">Pmen_0368</name>
</gene>
<proteinExistence type="inferred from homology"/>
<keyword id="KW-0067">ATP-binding</keyword>
<keyword id="KW-0963">Cytoplasm</keyword>
<keyword id="KW-0210">Decarboxylase</keyword>
<keyword id="KW-0312">Gluconeogenesis</keyword>
<keyword id="KW-0456">Lyase</keyword>
<keyword id="KW-0464">Manganese</keyword>
<keyword id="KW-0479">Metal-binding</keyword>
<keyword id="KW-0547">Nucleotide-binding</keyword>
<dbReference type="EC" id="4.1.1.49" evidence="1"/>
<dbReference type="EMBL" id="CP000680">
    <property type="protein sequence ID" value="ABP83141.1"/>
    <property type="molecule type" value="Genomic_DNA"/>
</dbReference>
<dbReference type="SMR" id="A4XP75"/>
<dbReference type="STRING" id="399739.Pmen_0368"/>
<dbReference type="KEGG" id="pmy:Pmen_0368"/>
<dbReference type="PATRIC" id="fig|399739.8.peg.377"/>
<dbReference type="eggNOG" id="COG1866">
    <property type="taxonomic scope" value="Bacteria"/>
</dbReference>
<dbReference type="HOGENOM" id="CLU_018247_0_1_6"/>
<dbReference type="OrthoDB" id="9806325at2"/>
<dbReference type="UniPathway" id="UPA00138"/>
<dbReference type="GO" id="GO:0005829">
    <property type="term" value="C:cytosol"/>
    <property type="evidence" value="ECO:0007669"/>
    <property type="project" value="TreeGrafter"/>
</dbReference>
<dbReference type="GO" id="GO:0005524">
    <property type="term" value="F:ATP binding"/>
    <property type="evidence" value="ECO:0007669"/>
    <property type="project" value="UniProtKB-UniRule"/>
</dbReference>
<dbReference type="GO" id="GO:0046872">
    <property type="term" value="F:metal ion binding"/>
    <property type="evidence" value="ECO:0007669"/>
    <property type="project" value="UniProtKB-KW"/>
</dbReference>
<dbReference type="GO" id="GO:0004612">
    <property type="term" value="F:phosphoenolpyruvate carboxykinase (ATP) activity"/>
    <property type="evidence" value="ECO:0007669"/>
    <property type="project" value="UniProtKB-UniRule"/>
</dbReference>
<dbReference type="GO" id="GO:0006094">
    <property type="term" value="P:gluconeogenesis"/>
    <property type="evidence" value="ECO:0007669"/>
    <property type="project" value="UniProtKB-UniRule"/>
</dbReference>
<dbReference type="CDD" id="cd00484">
    <property type="entry name" value="PEPCK_ATP"/>
    <property type="match status" value="1"/>
</dbReference>
<dbReference type="Gene3D" id="3.90.228.20">
    <property type="match status" value="1"/>
</dbReference>
<dbReference type="Gene3D" id="3.40.449.10">
    <property type="entry name" value="Phosphoenolpyruvate Carboxykinase, domain 1"/>
    <property type="match status" value="1"/>
</dbReference>
<dbReference type="Gene3D" id="2.170.8.10">
    <property type="entry name" value="Phosphoenolpyruvate Carboxykinase, domain 2"/>
    <property type="match status" value="1"/>
</dbReference>
<dbReference type="HAMAP" id="MF_00453">
    <property type="entry name" value="PEPCK_ATP"/>
    <property type="match status" value="1"/>
</dbReference>
<dbReference type="InterPro" id="IPR001272">
    <property type="entry name" value="PEP_carboxykinase_ATP"/>
</dbReference>
<dbReference type="InterPro" id="IPR013035">
    <property type="entry name" value="PEP_carboxykinase_C"/>
</dbReference>
<dbReference type="InterPro" id="IPR008210">
    <property type="entry name" value="PEP_carboxykinase_N"/>
</dbReference>
<dbReference type="InterPro" id="IPR015994">
    <property type="entry name" value="PEPCK_ATP_CS"/>
</dbReference>
<dbReference type="NCBIfam" id="TIGR00224">
    <property type="entry name" value="pckA"/>
    <property type="match status" value="1"/>
</dbReference>
<dbReference type="NCBIfam" id="NF006820">
    <property type="entry name" value="PRK09344.1-2"/>
    <property type="match status" value="1"/>
</dbReference>
<dbReference type="NCBIfam" id="NF006821">
    <property type="entry name" value="PRK09344.1-3"/>
    <property type="match status" value="1"/>
</dbReference>
<dbReference type="NCBIfam" id="NF006823">
    <property type="entry name" value="PRK09344.1-5"/>
    <property type="match status" value="1"/>
</dbReference>
<dbReference type="PANTHER" id="PTHR30031:SF0">
    <property type="entry name" value="PHOSPHOENOLPYRUVATE CARBOXYKINASE (ATP)"/>
    <property type="match status" value="1"/>
</dbReference>
<dbReference type="PANTHER" id="PTHR30031">
    <property type="entry name" value="PHOSPHOENOLPYRUVATE CARBOXYKINASE ATP"/>
    <property type="match status" value="1"/>
</dbReference>
<dbReference type="Pfam" id="PF01293">
    <property type="entry name" value="PEPCK_ATP"/>
    <property type="match status" value="1"/>
</dbReference>
<dbReference type="PIRSF" id="PIRSF006294">
    <property type="entry name" value="PEP_crbxkin"/>
    <property type="match status" value="1"/>
</dbReference>
<dbReference type="SUPFAM" id="SSF68923">
    <property type="entry name" value="PEP carboxykinase N-terminal domain"/>
    <property type="match status" value="1"/>
</dbReference>
<dbReference type="SUPFAM" id="SSF53795">
    <property type="entry name" value="PEP carboxykinase-like"/>
    <property type="match status" value="1"/>
</dbReference>
<dbReference type="PROSITE" id="PS00532">
    <property type="entry name" value="PEPCK_ATP"/>
    <property type="match status" value="1"/>
</dbReference>
<accession>A4XP75</accession>
<name>PCKA_ECTM1</name>
<comment type="function">
    <text evidence="1">Involved in the gluconeogenesis. Catalyzes the conversion of oxaloacetate (OAA) to phosphoenolpyruvate (PEP) through direct phosphoryl transfer between the nucleoside triphosphate and OAA.</text>
</comment>
<comment type="catalytic activity">
    <reaction evidence="1">
        <text>oxaloacetate + ATP = phosphoenolpyruvate + ADP + CO2</text>
        <dbReference type="Rhea" id="RHEA:18617"/>
        <dbReference type="ChEBI" id="CHEBI:16452"/>
        <dbReference type="ChEBI" id="CHEBI:16526"/>
        <dbReference type="ChEBI" id="CHEBI:30616"/>
        <dbReference type="ChEBI" id="CHEBI:58702"/>
        <dbReference type="ChEBI" id="CHEBI:456216"/>
        <dbReference type="EC" id="4.1.1.49"/>
    </reaction>
</comment>
<comment type="cofactor">
    <cofactor evidence="1">
        <name>Mn(2+)</name>
        <dbReference type="ChEBI" id="CHEBI:29035"/>
    </cofactor>
    <text evidence="1">Binds 1 Mn(2+) ion per subunit.</text>
</comment>
<comment type="pathway">
    <text evidence="1">Carbohydrate biosynthesis; gluconeogenesis.</text>
</comment>
<comment type="subunit">
    <text evidence="1">Monomer.</text>
</comment>
<comment type="subcellular location">
    <subcellularLocation>
        <location evidence="1">Cytoplasm</location>
    </subcellularLocation>
</comment>
<comment type="similarity">
    <text evidence="1">Belongs to the phosphoenolpyruvate carboxykinase (ATP) family.</text>
</comment>
<evidence type="ECO:0000255" key="1">
    <source>
        <dbReference type="HAMAP-Rule" id="MF_00453"/>
    </source>
</evidence>